<reference key="1">
    <citation type="journal article" date="2007" name="Proc. Natl. Acad. Sci. U.S.A.">
        <title>Deep-sea vent epsilon-proteobacterial genomes provide insights into emergence of pathogens.</title>
        <authorList>
            <person name="Nakagawa S."/>
            <person name="Takaki Y."/>
            <person name="Shimamura S."/>
            <person name="Reysenbach A.-L."/>
            <person name="Takai K."/>
            <person name="Horikoshi K."/>
        </authorList>
    </citation>
    <scope>NUCLEOTIDE SEQUENCE [LARGE SCALE GENOMIC DNA]</scope>
    <source>
        <strain>SB155-2</strain>
    </source>
</reference>
<organism>
    <name type="scientific">Nitratiruptor sp. (strain SB155-2)</name>
    <dbReference type="NCBI Taxonomy" id="387092"/>
    <lineage>
        <taxon>Bacteria</taxon>
        <taxon>Pseudomonadati</taxon>
        <taxon>Campylobacterota</taxon>
        <taxon>Epsilonproteobacteria</taxon>
        <taxon>Nautiliales</taxon>
        <taxon>Nitratiruptoraceae</taxon>
        <taxon>Nitratiruptor</taxon>
    </lineage>
</organism>
<protein>
    <recommendedName>
        <fullName evidence="1">Formate-dependent phosphoribosylglycinamide formyltransferase</fullName>
        <ecNumber evidence="1">6.3.1.21</ecNumber>
    </recommendedName>
    <alternativeName>
        <fullName evidence="1">5'-phosphoribosylglycinamide transformylase 2</fullName>
    </alternativeName>
    <alternativeName>
        <fullName evidence="1">Formate-dependent GAR transformylase</fullName>
    </alternativeName>
    <alternativeName>
        <fullName evidence="1">GAR transformylase 2</fullName>
        <shortName evidence="1">GART 2</shortName>
    </alternativeName>
    <alternativeName>
        <fullName evidence="1">Non-folate glycinamide ribonucleotide transformylase</fullName>
    </alternativeName>
    <alternativeName>
        <fullName evidence="1">Phosphoribosylglycinamide formyltransferase 2</fullName>
    </alternativeName>
</protein>
<gene>
    <name evidence="1" type="primary">purT</name>
    <name type="ordered locus">NIS_0130</name>
</gene>
<evidence type="ECO:0000255" key="1">
    <source>
        <dbReference type="HAMAP-Rule" id="MF_01643"/>
    </source>
</evidence>
<accession>A6Q186</accession>
<feature type="chain" id="PRO_0000319190" description="Formate-dependent phosphoribosylglycinamide formyltransferase">
    <location>
        <begin position="1"/>
        <end position="388"/>
    </location>
</feature>
<feature type="domain" description="ATP-grasp" evidence="1">
    <location>
        <begin position="118"/>
        <end position="306"/>
    </location>
</feature>
<feature type="binding site" evidence="1">
    <location>
        <begin position="21"/>
        <end position="22"/>
    </location>
    <ligand>
        <name>N(1)-(5-phospho-beta-D-ribosyl)glycinamide</name>
        <dbReference type="ChEBI" id="CHEBI:143788"/>
    </ligand>
</feature>
<feature type="binding site" evidence="1">
    <location>
        <position position="81"/>
    </location>
    <ligand>
        <name>N(1)-(5-phospho-beta-D-ribosyl)glycinamide</name>
        <dbReference type="ChEBI" id="CHEBI:143788"/>
    </ligand>
</feature>
<feature type="binding site" evidence="1">
    <location>
        <position position="113"/>
    </location>
    <ligand>
        <name>ATP</name>
        <dbReference type="ChEBI" id="CHEBI:30616"/>
    </ligand>
</feature>
<feature type="binding site" evidence="1">
    <location>
        <position position="154"/>
    </location>
    <ligand>
        <name>ATP</name>
        <dbReference type="ChEBI" id="CHEBI:30616"/>
    </ligand>
</feature>
<feature type="binding site" evidence="1">
    <location>
        <begin position="159"/>
        <end position="164"/>
    </location>
    <ligand>
        <name>ATP</name>
        <dbReference type="ChEBI" id="CHEBI:30616"/>
    </ligand>
</feature>
<feature type="binding site" evidence="1">
    <location>
        <begin position="193"/>
        <end position="196"/>
    </location>
    <ligand>
        <name>ATP</name>
        <dbReference type="ChEBI" id="CHEBI:30616"/>
    </ligand>
</feature>
<feature type="binding site" evidence="1">
    <location>
        <position position="201"/>
    </location>
    <ligand>
        <name>ATP</name>
        <dbReference type="ChEBI" id="CHEBI:30616"/>
    </ligand>
</feature>
<feature type="binding site" evidence="1">
    <location>
        <position position="265"/>
    </location>
    <ligand>
        <name>Mg(2+)</name>
        <dbReference type="ChEBI" id="CHEBI:18420"/>
    </ligand>
</feature>
<feature type="binding site" evidence="1">
    <location>
        <position position="277"/>
    </location>
    <ligand>
        <name>Mg(2+)</name>
        <dbReference type="ChEBI" id="CHEBI:18420"/>
    </ligand>
</feature>
<feature type="binding site" evidence="1">
    <location>
        <position position="284"/>
    </location>
    <ligand>
        <name>N(1)-(5-phospho-beta-D-ribosyl)glycinamide</name>
        <dbReference type="ChEBI" id="CHEBI:143788"/>
    </ligand>
</feature>
<feature type="binding site" evidence="1">
    <location>
        <position position="352"/>
    </location>
    <ligand>
        <name>N(1)-(5-phospho-beta-D-ribosyl)glycinamide</name>
        <dbReference type="ChEBI" id="CHEBI:143788"/>
    </ligand>
</feature>
<feature type="binding site" evidence="1">
    <location>
        <begin position="359"/>
        <end position="360"/>
    </location>
    <ligand>
        <name>N(1)-(5-phospho-beta-D-ribosyl)glycinamide</name>
        <dbReference type="ChEBI" id="CHEBI:143788"/>
    </ligand>
</feature>
<comment type="function">
    <text evidence="1">Involved in the de novo purine biosynthesis. Catalyzes the transfer of formate to 5-phospho-ribosyl-glycinamide (GAR), producing 5-phospho-ribosyl-N-formylglycinamide (FGAR). Formate is provided by PurU via hydrolysis of 10-formyl-tetrahydrofolate.</text>
</comment>
<comment type="catalytic activity">
    <reaction evidence="1">
        <text>N(1)-(5-phospho-beta-D-ribosyl)glycinamide + formate + ATP = N(2)-formyl-N(1)-(5-phospho-beta-D-ribosyl)glycinamide + ADP + phosphate + H(+)</text>
        <dbReference type="Rhea" id="RHEA:24829"/>
        <dbReference type="ChEBI" id="CHEBI:15378"/>
        <dbReference type="ChEBI" id="CHEBI:15740"/>
        <dbReference type="ChEBI" id="CHEBI:30616"/>
        <dbReference type="ChEBI" id="CHEBI:43474"/>
        <dbReference type="ChEBI" id="CHEBI:143788"/>
        <dbReference type="ChEBI" id="CHEBI:147286"/>
        <dbReference type="ChEBI" id="CHEBI:456216"/>
        <dbReference type="EC" id="6.3.1.21"/>
    </reaction>
    <physiologicalReaction direction="left-to-right" evidence="1">
        <dbReference type="Rhea" id="RHEA:24830"/>
    </physiologicalReaction>
</comment>
<comment type="pathway">
    <text evidence="1">Purine metabolism; IMP biosynthesis via de novo pathway; N(2)-formyl-N(1)-(5-phospho-D-ribosyl)glycinamide from N(1)-(5-phospho-D-ribosyl)glycinamide (formate route): step 1/1.</text>
</comment>
<comment type="subunit">
    <text evidence="1">Homodimer.</text>
</comment>
<comment type="similarity">
    <text evidence="1">Belongs to the PurK/PurT family.</text>
</comment>
<dbReference type="EC" id="6.3.1.21" evidence="1"/>
<dbReference type="EMBL" id="AP009178">
    <property type="protein sequence ID" value="BAF69245.1"/>
    <property type="molecule type" value="Genomic_DNA"/>
</dbReference>
<dbReference type="RefSeq" id="WP_011979671.1">
    <property type="nucleotide sequence ID" value="NC_009662.1"/>
</dbReference>
<dbReference type="SMR" id="A6Q186"/>
<dbReference type="FunCoup" id="A6Q186">
    <property type="interactions" value="81"/>
</dbReference>
<dbReference type="STRING" id="387092.NIS_0130"/>
<dbReference type="KEGG" id="nis:NIS_0130"/>
<dbReference type="eggNOG" id="COG0027">
    <property type="taxonomic scope" value="Bacteria"/>
</dbReference>
<dbReference type="HOGENOM" id="CLU_011534_1_3_7"/>
<dbReference type="InParanoid" id="A6Q186"/>
<dbReference type="OrthoDB" id="9804625at2"/>
<dbReference type="UniPathway" id="UPA00074">
    <property type="reaction ID" value="UER00127"/>
</dbReference>
<dbReference type="Proteomes" id="UP000001118">
    <property type="component" value="Chromosome"/>
</dbReference>
<dbReference type="GO" id="GO:0005829">
    <property type="term" value="C:cytosol"/>
    <property type="evidence" value="ECO:0007669"/>
    <property type="project" value="TreeGrafter"/>
</dbReference>
<dbReference type="GO" id="GO:0005524">
    <property type="term" value="F:ATP binding"/>
    <property type="evidence" value="ECO:0007669"/>
    <property type="project" value="UniProtKB-UniRule"/>
</dbReference>
<dbReference type="GO" id="GO:0000287">
    <property type="term" value="F:magnesium ion binding"/>
    <property type="evidence" value="ECO:0007669"/>
    <property type="project" value="InterPro"/>
</dbReference>
<dbReference type="GO" id="GO:0043815">
    <property type="term" value="F:phosphoribosylglycinamide formyltransferase 2 activity"/>
    <property type="evidence" value="ECO:0007669"/>
    <property type="project" value="UniProtKB-UniRule"/>
</dbReference>
<dbReference type="GO" id="GO:0004644">
    <property type="term" value="F:phosphoribosylglycinamide formyltransferase activity"/>
    <property type="evidence" value="ECO:0007669"/>
    <property type="project" value="InterPro"/>
</dbReference>
<dbReference type="GO" id="GO:0006189">
    <property type="term" value="P:'de novo' IMP biosynthetic process"/>
    <property type="evidence" value="ECO:0007669"/>
    <property type="project" value="UniProtKB-UniRule"/>
</dbReference>
<dbReference type="Gene3D" id="3.40.50.20">
    <property type="match status" value="1"/>
</dbReference>
<dbReference type="Gene3D" id="3.30.1490.20">
    <property type="entry name" value="ATP-grasp fold, A domain"/>
    <property type="match status" value="1"/>
</dbReference>
<dbReference type="Gene3D" id="3.30.470.20">
    <property type="entry name" value="ATP-grasp fold, B domain"/>
    <property type="match status" value="1"/>
</dbReference>
<dbReference type="HAMAP" id="MF_01643">
    <property type="entry name" value="PurT"/>
    <property type="match status" value="1"/>
</dbReference>
<dbReference type="InterPro" id="IPR011761">
    <property type="entry name" value="ATP-grasp"/>
</dbReference>
<dbReference type="InterPro" id="IPR003135">
    <property type="entry name" value="ATP-grasp_carboxylate-amine"/>
</dbReference>
<dbReference type="InterPro" id="IPR013815">
    <property type="entry name" value="ATP_grasp_subdomain_1"/>
</dbReference>
<dbReference type="InterPro" id="IPR016185">
    <property type="entry name" value="PreATP-grasp_dom_sf"/>
</dbReference>
<dbReference type="InterPro" id="IPR005862">
    <property type="entry name" value="PurT"/>
</dbReference>
<dbReference type="InterPro" id="IPR054350">
    <property type="entry name" value="PurT/PurK_preATP-grasp"/>
</dbReference>
<dbReference type="InterPro" id="IPR048740">
    <property type="entry name" value="PurT_C"/>
</dbReference>
<dbReference type="NCBIfam" id="NF006766">
    <property type="entry name" value="PRK09288.1"/>
    <property type="match status" value="1"/>
</dbReference>
<dbReference type="NCBIfam" id="TIGR01142">
    <property type="entry name" value="purT"/>
    <property type="match status" value="1"/>
</dbReference>
<dbReference type="PANTHER" id="PTHR43055">
    <property type="entry name" value="FORMATE-DEPENDENT PHOSPHORIBOSYLGLYCINAMIDE FORMYLTRANSFERASE"/>
    <property type="match status" value="1"/>
</dbReference>
<dbReference type="PANTHER" id="PTHR43055:SF1">
    <property type="entry name" value="FORMATE-DEPENDENT PHOSPHORIBOSYLGLYCINAMIDE FORMYLTRANSFERASE"/>
    <property type="match status" value="1"/>
</dbReference>
<dbReference type="Pfam" id="PF02222">
    <property type="entry name" value="ATP-grasp"/>
    <property type="match status" value="1"/>
</dbReference>
<dbReference type="Pfam" id="PF21244">
    <property type="entry name" value="PurT_C"/>
    <property type="match status" value="1"/>
</dbReference>
<dbReference type="Pfam" id="PF22660">
    <property type="entry name" value="RS_preATP-grasp-like"/>
    <property type="match status" value="1"/>
</dbReference>
<dbReference type="SUPFAM" id="SSF56059">
    <property type="entry name" value="Glutathione synthetase ATP-binding domain-like"/>
    <property type="match status" value="1"/>
</dbReference>
<dbReference type="SUPFAM" id="SSF52440">
    <property type="entry name" value="PreATP-grasp domain"/>
    <property type="match status" value="1"/>
</dbReference>
<dbReference type="PROSITE" id="PS50975">
    <property type="entry name" value="ATP_GRASP"/>
    <property type="match status" value="1"/>
</dbReference>
<sequence length="388" mass="43101">MQFPAPLKSNSIKFLLLGSGELGKEVAIEAQRLGIEVVAVDRYPNAPAHLVAHRSYVIDMKSKEQVLEVIFREKPDYILPEIEAINIEALFEAEERGFRVIPNAEAVNKTMNRKNIRKFAAEELGLKTSQYRFVSSFEGLQEAARTLGFPCVIKPVMSSSGHGQSIARNEADLERSWEIAKEARGDASELIVEEFIDFDYEITLLTARNETGTVFCPPIGHIQKDGDYIFSWQPMQMSETALQKAKEIAKTITDGLGGRGIFGVELFVKGDEVYFSEVSPRPHDTGMVTMITQSQSEFALHVRAVLGLGLGFTFYTPGASAAYKAKHESFTPVIEADESVFDQESFLRVFGKPESHEGRRMAVVLTLAETAEQALQKANELIAKVSDQ</sequence>
<proteinExistence type="inferred from homology"/>
<keyword id="KW-0067">ATP-binding</keyword>
<keyword id="KW-0436">Ligase</keyword>
<keyword id="KW-0460">Magnesium</keyword>
<keyword id="KW-0479">Metal-binding</keyword>
<keyword id="KW-0547">Nucleotide-binding</keyword>
<keyword id="KW-0658">Purine biosynthesis</keyword>
<keyword id="KW-1185">Reference proteome</keyword>
<name>PURT_NITSB</name>